<accession>Q5EAE6</accession>
<accession>Q3SYY4</accession>
<protein>
    <recommendedName>
        <fullName>Death-associated protein 1</fullName>
        <shortName>DAP-1</shortName>
    </recommendedName>
</protein>
<sequence length="102" mass="11189">MSSPPEGKLETKAGHPPAVKAGGMRIVQKHPHSGDTREEKDKDDQEWESPSPPKPTVFISGVIARGDKDFPPAAAQVAHQKPHASIDRHPSPRTQHIQQPRK</sequence>
<name>DAP1_BOVIN</name>
<evidence type="ECO:0000250" key="1">
    <source>
        <dbReference type="UniProtKB" id="P51397"/>
    </source>
</evidence>
<evidence type="ECO:0000250" key="2">
    <source>
        <dbReference type="UniProtKB" id="Q91XC8"/>
    </source>
</evidence>
<evidence type="ECO:0000250" key="3">
    <source>
        <dbReference type="UniProtKB" id="Q9I9N1"/>
    </source>
</evidence>
<evidence type="ECO:0000256" key="4">
    <source>
        <dbReference type="SAM" id="MobiDB-lite"/>
    </source>
</evidence>
<evidence type="ECO:0000305" key="5"/>
<keyword id="KW-0007">Acetylation</keyword>
<keyword id="KW-0053">Apoptosis</keyword>
<keyword id="KW-0072">Autophagy</keyword>
<keyword id="KW-0597">Phosphoprotein</keyword>
<keyword id="KW-1185">Reference proteome</keyword>
<keyword id="KW-0810">Translation regulation</keyword>
<reference key="1">
    <citation type="journal article" date="2005" name="BMC Genomics">
        <title>Characterization of 954 bovine full-CDS cDNA sequences.</title>
        <authorList>
            <person name="Harhay G.P."/>
            <person name="Sonstegard T.S."/>
            <person name="Keele J.W."/>
            <person name="Heaton M.P."/>
            <person name="Clawson M.L."/>
            <person name="Snelling W.M."/>
            <person name="Wiedmann R.T."/>
            <person name="Van Tassell C.P."/>
            <person name="Smith T.P.L."/>
        </authorList>
    </citation>
    <scope>NUCLEOTIDE SEQUENCE [LARGE SCALE MRNA]</scope>
</reference>
<reference key="2">
    <citation type="submission" date="2005-08" db="EMBL/GenBank/DDBJ databases">
        <authorList>
            <consortium name="NIH - Mammalian Gene Collection (MGC) project"/>
        </authorList>
    </citation>
    <scope>NUCLEOTIDE SEQUENCE [LARGE SCALE MRNA]</scope>
    <source>
        <strain>Crossbred X Angus</strain>
        <tissue>Ileum</tissue>
    </source>
</reference>
<gene>
    <name type="primary">DAP</name>
</gene>
<organism>
    <name type="scientific">Bos taurus</name>
    <name type="common">Bovine</name>
    <dbReference type="NCBI Taxonomy" id="9913"/>
    <lineage>
        <taxon>Eukaryota</taxon>
        <taxon>Metazoa</taxon>
        <taxon>Chordata</taxon>
        <taxon>Craniata</taxon>
        <taxon>Vertebrata</taxon>
        <taxon>Euteleostomi</taxon>
        <taxon>Mammalia</taxon>
        <taxon>Eutheria</taxon>
        <taxon>Laurasiatheria</taxon>
        <taxon>Artiodactyla</taxon>
        <taxon>Ruminantia</taxon>
        <taxon>Pecora</taxon>
        <taxon>Bovidae</taxon>
        <taxon>Bovinae</taxon>
        <taxon>Bos</taxon>
    </lineage>
</organism>
<proteinExistence type="inferred from homology"/>
<dbReference type="EMBL" id="BT020623">
    <property type="protein sequence ID" value="AAX08640.1"/>
    <property type="molecule type" value="mRNA"/>
</dbReference>
<dbReference type="EMBL" id="BC103332">
    <property type="protein sequence ID" value="AAI03333.1"/>
    <property type="molecule type" value="mRNA"/>
</dbReference>
<dbReference type="RefSeq" id="NP_001071526.1">
    <property type="nucleotide sequence ID" value="NM_001078058.2"/>
</dbReference>
<dbReference type="FunCoup" id="Q5EAE6">
    <property type="interactions" value="866"/>
</dbReference>
<dbReference type="STRING" id="9913.ENSBTAP00000008327"/>
<dbReference type="PaxDb" id="9913-ENSBTAP00000008327"/>
<dbReference type="Ensembl" id="ENSBTAT00000008327.4">
    <property type="protein sequence ID" value="ENSBTAP00000008327.2"/>
    <property type="gene ID" value="ENSBTAG00000006346.4"/>
</dbReference>
<dbReference type="GeneID" id="616066"/>
<dbReference type="KEGG" id="bta:616066"/>
<dbReference type="CTD" id="1611"/>
<dbReference type="VEuPathDB" id="HostDB:ENSBTAG00000006346"/>
<dbReference type="VGNC" id="VGNC:50122">
    <property type="gene designation" value="DAP"/>
</dbReference>
<dbReference type="eggNOG" id="ENOG502S4ST">
    <property type="taxonomic scope" value="Eukaryota"/>
</dbReference>
<dbReference type="GeneTree" id="ENSGT00940000154574"/>
<dbReference type="HOGENOM" id="CLU_150759_2_0_1"/>
<dbReference type="InParanoid" id="Q5EAE6"/>
<dbReference type="OMA" id="QKHPHAP"/>
<dbReference type="OrthoDB" id="5973225at2759"/>
<dbReference type="TreeFam" id="TF329716"/>
<dbReference type="Proteomes" id="UP000009136">
    <property type="component" value="Chromosome 20"/>
</dbReference>
<dbReference type="Bgee" id="ENSBTAG00000006346">
    <property type="expression patterns" value="Expressed in saliva-secreting gland and 106 other cell types or tissues"/>
</dbReference>
<dbReference type="GO" id="GO:0043022">
    <property type="term" value="F:ribosome binding"/>
    <property type="evidence" value="ECO:0000318"/>
    <property type="project" value="GO_Central"/>
</dbReference>
<dbReference type="GO" id="GO:0097190">
    <property type="term" value="P:apoptotic signaling pathway"/>
    <property type="evidence" value="ECO:0000318"/>
    <property type="project" value="GO_Central"/>
</dbReference>
<dbReference type="GO" id="GO:0006914">
    <property type="term" value="P:autophagy"/>
    <property type="evidence" value="ECO:0007669"/>
    <property type="project" value="UniProtKB-KW"/>
</dbReference>
<dbReference type="GO" id="GO:0010507">
    <property type="term" value="P:negative regulation of autophagy"/>
    <property type="evidence" value="ECO:0000318"/>
    <property type="project" value="GO_Central"/>
</dbReference>
<dbReference type="GO" id="GO:0141014">
    <property type="term" value="P:ribosome hibernation"/>
    <property type="evidence" value="ECO:0000318"/>
    <property type="project" value="GO_Central"/>
</dbReference>
<dbReference type="InterPro" id="IPR024130">
    <property type="entry name" value="DAP1/DAPL1"/>
</dbReference>
<dbReference type="PANTHER" id="PTHR13177">
    <property type="entry name" value="DEATH-ASSOCIATED PROTEIN 1"/>
    <property type="match status" value="1"/>
</dbReference>
<dbReference type="PANTHER" id="PTHR13177:SF3">
    <property type="entry name" value="DEATH-ASSOCIATED PROTEIN 1"/>
    <property type="match status" value="1"/>
</dbReference>
<dbReference type="Pfam" id="PF15228">
    <property type="entry name" value="DAP"/>
    <property type="match status" value="1"/>
</dbReference>
<comment type="function">
    <text evidence="1 3">Ribosome-binding protein involved in ribosome hibernation, a process during which ribosomes are stabilized in an inactive state and preserved from proteasomal degradation. Acts via its association with eiF5a (EIF5A and EIF5A2) at the polypeptide exit tunnel of the ribosome, preventing mRNA translation. Involved in ribosome hibernation in the mature oocyte by preventing mRNA translation, leading to ribosome inactivation. Ribosomes, which are produced in large quantities during oogenesis, are stored and translationally repressed in the oocyte and early embryo (By similarity). Also acts as a negative regulator of autophagy. Involved in mediating interferon-gamma-induced cell death (By similarity).</text>
</comment>
<comment type="subunit">
    <text evidence="3">Associates with ribosomes; inhibiting translation. Interacts with eiF5a (EIF5A and EIF5A2); inhibiting translation.</text>
</comment>
<comment type="PTM">
    <text evidence="1">Phosphorylated. Phosphorylation by MTOR inhibits the suppressive activity of DAP toward autophagy.</text>
</comment>
<comment type="similarity">
    <text evidence="5">Belongs to the DAP-DAPL1 family.</text>
</comment>
<feature type="initiator methionine" description="Removed" evidence="1">
    <location>
        <position position="1"/>
    </location>
</feature>
<feature type="chain" id="PRO_0000239991" description="Death-associated protein 1">
    <location>
        <begin position="2"/>
        <end position="102"/>
    </location>
</feature>
<feature type="region of interest" description="Disordered" evidence="4">
    <location>
        <begin position="1"/>
        <end position="102"/>
    </location>
</feature>
<feature type="compositionally biased region" description="Basic and acidic residues" evidence="4">
    <location>
        <begin position="32"/>
        <end position="43"/>
    </location>
</feature>
<feature type="compositionally biased region" description="Polar residues" evidence="4">
    <location>
        <begin position="92"/>
        <end position="102"/>
    </location>
</feature>
<feature type="modified residue" description="N-acetylserine" evidence="1">
    <location>
        <position position="2"/>
    </location>
</feature>
<feature type="modified residue" description="Phosphoserine; by MTOR" evidence="1">
    <location>
        <position position="3"/>
    </location>
</feature>
<feature type="modified residue" description="N6-acetyllysine" evidence="2">
    <location>
        <position position="29"/>
    </location>
</feature>
<feature type="modified residue" description="Phosphoserine" evidence="1">
    <location>
        <position position="49"/>
    </location>
</feature>
<feature type="modified residue" description="Phosphoserine; by MTOR" evidence="1">
    <location>
        <position position="51"/>
    </location>
</feature>
<feature type="modified residue" description="Phosphoserine" evidence="1">
    <location>
        <position position="91"/>
    </location>
</feature>
<feature type="sequence conflict" description="In Ref. 1; AAX08640." evidence="5" ref="1">
    <original>TR</original>
    <variation>AK</variation>
    <location>
        <begin position="36"/>
        <end position="37"/>
    </location>
</feature>
<feature type="sequence conflict" description="In Ref. 1; AAX08640." evidence="5" ref="1">
    <original>V</original>
    <variation>A</variation>
    <location>
        <position position="62"/>
    </location>
</feature>
<feature type="sequence conflict" description="In Ref. 1; AAX08640." evidence="5" ref="1">
    <original>R</original>
    <variation>K</variation>
    <location>
        <position position="88"/>
    </location>
</feature>
<feature type="sequence conflict" description="In Ref. 1; AAX08640." evidence="5" ref="1">
    <original>S</original>
    <variation>C</variation>
    <location>
        <position position="91"/>
    </location>
</feature>